<protein>
    <recommendedName>
        <fullName evidence="1">Putative pterin-4-alpha-carbinolamine dehydratase</fullName>
        <shortName evidence="1">PHS</shortName>
        <ecNumber evidence="1">4.2.1.96</ecNumber>
    </recommendedName>
    <alternativeName>
        <fullName evidence="1">4-alpha-hydroxy-tetrahydropterin dehydratase</fullName>
    </alternativeName>
    <alternativeName>
        <fullName evidence="1">Pterin carbinolamine dehydratase</fullName>
        <shortName evidence="1">PCD</shortName>
    </alternativeName>
</protein>
<comment type="catalytic activity">
    <reaction evidence="1">
        <text>(4aS,6R)-4a-hydroxy-L-erythro-5,6,7,8-tetrahydrobiopterin = (6R)-L-erythro-6,7-dihydrobiopterin + H2O</text>
        <dbReference type="Rhea" id="RHEA:11920"/>
        <dbReference type="ChEBI" id="CHEBI:15377"/>
        <dbReference type="ChEBI" id="CHEBI:15642"/>
        <dbReference type="ChEBI" id="CHEBI:43120"/>
        <dbReference type="EC" id="4.2.1.96"/>
    </reaction>
</comment>
<comment type="similarity">
    <text evidence="1">Belongs to the pterin-4-alpha-carbinolamine dehydratase family.</text>
</comment>
<evidence type="ECO:0000255" key="1">
    <source>
        <dbReference type="HAMAP-Rule" id="MF_00434"/>
    </source>
</evidence>
<name>PHS_RHILW</name>
<keyword id="KW-0456">Lyase</keyword>
<keyword id="KW-1185">Reference proteome</keyword>
<feature type="chain" id="PRO_1000192930" description="Putative pterin-4-alpha-carbinolamine dehydratase">
    <location>
        <begin position="1"/>
        <end position="101"/>
    </location>
</feature>
<accession>B5ZTF5</accession>
<proteinExistence type="inferred from homology"/>
<sequence>MKMERLERATIEAEMAGLAGWALNDAASSISKTFKFANFVEAFGFMTEAAIRAEKLNHHPEWFNVYSRVDVTLNTHDAGGLTELDFKLAKAMEKAAARRGV</sequence>
<gene>
    <name type="ordered locus">Rleg2_3728</name>
</gene>
<dbReference type="EC" id="4.2.1.96" evidence="1"/>
<dbReference type="EMBL" id="CP001191">
    <property type="protein sequence ID" value="ACI56991.1"/>
    <property type="molecule type" value="Genomic_DNA"/>
</dbReference>
<dbReference type="RefSeq" id="WP_012559244.1">
    <property type="nucleotide sequence ID" value="NC_011369.1"/>
</dbReference>
<dbReference type="SMR" id="B5ZTF5"/>
<dbReference type="STRING" id="395492.Rleg2_3728"/>
<dbReference type="KEGG" id="rlt:Rleg2_3728"/>
<dbReference type="eggNOG" id="COG2154">
    <property type="taxonomic scope" value="Bacteria"/>
</dbReference>
<dbReference type="HOGENOM" id="CLU_081974_3_2_5"/>
<dbReference type="Proteomes" id="UP000008330">
    <property type="component" value="Chromosome"/>
</dbReference>
<dbReference type="GO" id="GO:0008124">
    <property type="term" value="F:4-alpha-hydroxytetrahydrobiopterin dehydratase activity"/>
    <property type="evidence" value="ECO:0007669"/>
    <property type="project" value="UniProtKB-UniRule"/>
</dbReference>
<dbReference type="GO" id="GO:0006729">
    <property type="term" value="P:tetrahydrobiopterin biosynthetic process"/>
    <property type="evidence" value="ECO:0007669"/>
    <property type="project" value="InterPro"/>
</dbReference>
<dbReference type="CDD" id="cd00914">
    <property type="entry name" value="PCD_DCoH_subfamily_b"/>
    <property type="match status" value="1"/>
</dbReference>
<dbReference type="Gene3D" id="3.30.1360.20">
    <property type="entry name" value="Transcriptional coactivator/pterin dehydratase"/>
    <property type="match status" value="1"/>
</dbReference>
<dbReference type="HAMAP" id="MF_00434">
    <property type="entry name" value="Pterin_4_alpha"/>
    <property type="match status" value="1"/>
</dbReference>
<dbReference type="InterPro" id="IPR036428">
    <property type="entry name" value="PCD_sf"/>
</dbReference>
<dbReference type="InterPro" id="IPR001533">
    <property type="entry name" value="Pterin_deHydtase"/>
</dbReference>
<dbReference type="NCBIfam" id="NF002017">
    <property type="entry name" value="PRK00823.1-2"/>
    <property type="match status" value="1"/>
</dbReference>
<dbReference type="NCBIfam" id="NF002018">
    <property type="entry name" value="PRK00823.1-3"/>
    <property type="match status" value="1"/>
</dbReference>
<dbReference type="PANTHER" id="PTHR12599">
    <property type="entry name" value="PTERIN-4-ALPHA-CARBINOLAMINE DEHYDRATASE"/>
    <property type="match status" value="1"/>
</dbReference>
<dbReference type="PANTHER" id="PTHR12599:SF0">
    <property type="entry name" value="PTERIN-4-ALPHA-CARBINOLAMINE DEHYDRATASE"/>
    <property type="match status" value="1"/>
</dbReference>
<dbReference type="Pfam" id="PF01329">
    <property type="entry name" value="Pterin_4a"/>
    <property type="match status" value="1"/>
</dbReference>
<dbReference type="SUPFAM" id="SSF55248">
    <property type="entry name" value="PCD-like"/>
    <property type="match status" value="1"/>
</dbReference>
<reference key="1">
    <citation type="journal article" date="2010" name="Stand. Genomic Sci.">
        <title>Complete genome sequence of Rhizobium leguminosarum bv trifolii strain WSM2304, an effective microsymbiont of the South American clover Trifolium polymorphum.</title>
        <authorList>
            <person name="Reeve W."/>
            <person name="O'Hara G."/>
            <person name="Chain P."/>
            <person name="Ardley J."/>
            <person name="Brau L."/>
            <person name="Nandesena K."/>
            <person name="Tiwari R."/>
            <person name="Malfatti S."/>
            <person name="Kiss H."/>
            <person name="Lapidus A."/>
            <person name="Copeland A."/>
            <person name="Nolan M."/>
            <person name="Land M."/>
            <person name="Ivanova N."/>
            <person name="Mavromatis K."/>
            <person name="Markowitz V."/>
            <person name="Kyrpides N."/>
            <person name="Melino V."/>
            <person name="Denton M."/>
            <person name="Yates R."/>
            <person name="Howieson J."/>
        </authorList>
    </citation>
    <scope>NUCLEOTIDE SEQUENCE [LARGE SCALE GENOMIC DNA]</scope>
    <source>
        <strain>WSM2304</strain>
    </source>
</reference>
<organism>
    <name type="scientific">Rhizobium leguminosarum bv. trifolii (strain WSM2304)</name>
    <dbReference type="NCBI Taxonomy" id="395492"/>
    <lineage>
        <taxon>Bacteria</taxon>
        <taxon>Pseudomonadati</taxon>
        <taxon>Pseudomonadota</taxon>
        <taxon>Alphaproteobacteria</taxon>
        <taxon>Hyphomicrobiales</taxon>
        <taxon>Rhizobiaceae</taxon>
        <taxon>Rhizobium/Agrobacterium group</taxon>
        <taxon>Rhizobium</taxon>
    </lineage>
</organism>